<comment type="function">
    <text evidence="1">Transfers a GMP moiety from GTP to Mo-molybdopterin (Mo-MPT) cofactor (Moco or molybdenum cofactor) to form Mo-molybdopterin guanine dinucleotide (Mo-MGD) cofactor.</text>
</comment>
<comment type="catalytic activity">
    <reaction evidence="1">
        <text>Mo-molybdopterin + GTP + H(+) = Mo-molybdopterin guanine dinucleotide + diphosphate</text>
        <dbReference type="Rhea" id="RHEA:34243"/>
        <dbReference type="ChEBI" id="CHEBI:15378"/>
        <dbReference type="ChEBI" id="CHEBI:33019"/>
        <dbReference type="ChEBI" id="CHEBI:37565"/>
        <dbReference type="ChEBI" id="CHEBI:71302"/>
        <dbReference type="ChEBI" id="CHEBI:71310"/>
        <dbReference type="EC" id="2.7.7.77"/>
    </reaction>
</comment>
<comment type="cofactor">
    <cofactor evidence="1">
        <name>Mg(2+)</name>
        <dbReference type="ChEBI" id="CHEBI:18420"/>
    </cofactor>
</comment>
<comment type="subunit">
    <text evidence="1">Monomer.</text>
</comment>
<comment type="subcellular location">
    <subcellularLocation>
        <location evidence="1">Cytoplasm</location>
    </subcellularLocation>
</comment>
<comment type="domain">
    <text evidence="1">The N-terminal domain determines nucleotide recognition and specific binding, while the C-terminal domain determines the specific binding to the target protein.</text>
</comment>
<comment type="similarity">
    <text evidence="1">Belongs to the MobA family.</text>
</comment>
<feature type="chain" id="PRO_0000134889" description="Molybdenum cofactor guanylyltransferase">
    <location>
        <begin position="1"/>
        <end position="194"/>
    </location>
</feature>
<feature type="binding site" evidence="1">
    <location>
        <begin position="12"/>
        <end position="14"/>
    </location>
    <ligand>
        <name>GTP</name>
        <dbReference type="ChEBI" id="CHEBI:37565"/>
    </ligand>
</feature>
<feature type="binding site" evidence="1">
    <location>
        <position position="25"/>
    </location>
    <ligand>
        <name>GTP</name>
        <dbReference type="ChEBI" id="CHEBI:37565"/>
    </ligand>
</feature>
<feature type="binding site" evidence="1">
    <location>
        <position position="53"/>
    </location>
    <ligand>
        <name>GTP</name>
        <dbReference type="ChEBI" id="CHEBI:37565"/>
    </ligand>
</feature>
<feature type="binding site" evidence="1">
    <location>
        <position position="71"/>
    </location>
    <ligand>
        <name>GTP</name>
        <dbReference type="ChEBI" id="CHEBI:37565"/>
    </ligand>
</feature>
<feature type="binding site" evidence="1">
    <location>
        <position position="101"/>
    </location>
    <ligand>
        <name>GTP</name>
        <dbReference type="ChEBI" id="CHEBI:37565"/>
    </ligand>
</feature>
<feature type="binding site" evidence="1">
    <location>
        <position position="101"/>
    </location>
    <ligand>
        <name>Mg(2+)</name>
        <dbReference type="ChEBI" id="CHEBI:18420"/>
    </ligand>
</feature>
<evidence type="ECO:0000255" key="1">
    <source>
        <dbReference type="HAMAP-Rule" id="MF_00316"/>
    </source>
</evidence>
<name>MOBA_ECO57</name>
<accession>P58221</accession>
<proteinExistence type="inferred from homology"/>
<keyword id="KW-0963">Cytoplasm</keyword>
<keyword id="KW-0342">GTP-binding</keyword>
<keyword id="KW-0460">Magnesium</keyword>
<keyword id="KW-0479">Metal-binding</keyword>
<keyword id="KW-0501">Molybdenum cofactor biosynthesis</keyword>
<keyword id="KW-0547">Nucleotide-binding</keyword>
<keyword id="KW-1185">Reference proteome</keyword>
<keyword id="KW-0808">Transferase</keyword>
<organism>
    <name type="scientific">Escherichia coli O157:H7</name>
    <dbReference type="NCBI Taxonomy" id="83334"/>
    <lineage>
        <taxon>Bacteria</taxon>
        <taxon>Pseudomonadati</taxon>
        <taxon>Pseudomonadota</taxon>
        <taxon>Gammaproteobacteria</taxon>
        <taxon>Enterobacterales</taxon>
        <taxon>Enterobacteriaceae</taxon>
        <taxon>Escherichia</taxon>
    </lineage>
</organism>
<reference key="1">
    <citation type="journal article" date="2001" name="Nature">
        <title>Genome sequence of enterohaemorrhagic Escherichia coli O157:H7.</title>
        <authorList>
            <person name="Perna N.T."/>
            <person name="Plunkett G. III"/>
            <person name="Burland V."/>
            <person name="Mau B."/>
            <person name="Glasner J.D."/>
            <person name="Rose D.J."/>
            <person name="Mayhew G.F."/>
            <person name="Evans P.S."/>
            <person name="Gregor J."/>
            <person name="Kirkpatrick H.A."/>
            <person name="Posfai G."/>
            <person name="Hackett J."/>
            <person name="Klink S."/>
            <person name="Boutin A."/>
            <person name="Shao Y."/>
            <person name="Miller L."/>
            <person name="Grotbeck E.J."/>
            <person name="Davis N.W."/>
            <person name="Lim A."/>
            <person name="Dimalanta E.T."/>
            <person name="Potamousis K."/>
            <person name="Apodaca J."/>
            <person name="Anantharaman T.S."/>
            <person name="Lin J."/>
            <person name="Yen G."/>
            <person name="Schwartz D.C."/>
            <person name="Welch R.A."/>
            <person name="Blattner F.R."/>
        </authorList>
    </citation>
    <scope>NUCLEOTIDE SEQUENCE [LARGE SCALE GENOMIC DNA]</scope>
    <source>
        <strain>O157:H7 / EDL933 / ATCC 700927 / EHEC</strain>
    </source>
</reference>
<reference key="2">
    <citation type="journal article" date="2001" name="DNA Res.">
        <title>Complete genome sequence of enterohemorrhagic Escherichia coli O157:H7 and genomic comparison with a laboratory strain K-12.</title>
        <authorList>
            <person name="Hayashi T."/>
            <person name="Makino K."/>
            <person name="Ohnishi M."/>
            <person name="Kurokawa K."/>
            <person name="Ishii K."/>
            <person name="Yokoyama K."/>
            <person name="Han C.-G."/>
            <person name="Ohtsubo E."/>
            <person name="Nakayama K."/>
            <person name="Murata T."/>
            <person name="Tanaka M."/>
            <person name="Tobe T."/>
            <person name="Iida T."/>
            <person name="Takami H."/>
            <person name="Honda T."/>
            <person name="Sasakawa C."/>
            <person name="Ogasawara N."/>
            <person name="Yasunaga T."/>
            <person name="Kuhara S."/>
            <person name="Shiba T."/>
            <person name="Hattori M."/>
            <person name="Shinagawa H."/>
        </authorList>
    </citation>
    <scope>NUCLEOTIDE SEQUENCE [LARGE SCALE GENOMIC DNA]</scope>
    <source>
        <strain>O157:H7 / Sakai / RIMD 0509952 / EHEC</strain>
    </source>
</reference>
<reference key="3">
    <citation type="submission" date="1999-12" db="EMBL/GenBank/DDBJ databases">
        <title>Development of primer sets for direct sequence determination of all the ribosomal operons of Escherichia coli.</title>
        <authorList>
            <person name="Ohnishi M."/>
            <person name="Murata T."/>
            <person name="Nakayama K."/>
            <person name="Kuhara S."/>
            <person name="Hattori M."/>
            <person name="Kurokawa K."/>
            <person name="Yasunaga T."/>
            <person name="Makino K."/>
            <person name="Shinagawa H."/>
            <person name="Hayashi T."/>
        </authorList>
    </citation>
    <scope>NUCLEOTIDE SEQUENCE [GENOMIC DNA] OF 87-194</scope>
    <source>
        <strain>O157:H7 / Sakai / RIMD 0509952 / EHEC</strain>
    </source>
</reference>
<dbReference type="EC" id="2.7.7.77" evidence="1"/>
<dbReference type="EMBL" id="AE005174">
    <property type="protein sequence ID" value="AAG59046.1"/>
    <property type="molecule type" value="Genomic_DNA"/>
</dbReference>
<dbReference type="EMBL" id="BA000007">
    <property type="protein sequence ID" value="BAB38203.1"/>
    <property type="molecule type" value="Genomic_DNA"/>
</dbReference>
<dbReference type="EMBL" id="AB035920">
    <property type="protein sequence ID" value="BAA93557.1"/>
    <property type="molecule type" value="Genomic_DNA"/>
</dbReference>
<dbReference type="PIR" id="B86073">
    <property type="entry name" value="B86073"/>
</dbReference>
<dbReference type="PIR" id="D91226">
    <property type="entry name" value="D91226"/>
</dbReference>
<dbReference type="RefSeq" id="NP_312807.1">
    <property type="nucleotide sequence ID" value="NC_002695.1"/>
</dbReference>
<dbReference type="RefSeq" id="WP_001052159.1">
    <property type="nucleotide sequence ID" value="NZ_VOAI01000016.1"/>
</dbReference>
<dbReference type="SMR" id="P58221"/>
<dbReference type="STRING" id="155864.Z5389"/>
<dbReference type="GeneID" id="915117"/>
<dbReference type="KEGG" id="ece:Z5389"/>
<dbReference type="KEGG" id="ecs:ECs_4780"/>
<dbReference type="PATRIC" id="fig|386585.9.peg.4989"/>
<dbReference type="eggNOG" id="COG0746">
    <property type="taxonomic scope" value="Bacteria"/>
</dbReference>
<dbReference type="HOGENOM" id="CLU_055597_5_1_6"/>
<dbReference type="OMA" id="IDFWYAK"/>
<dbReference type="Proteomes" id="UP000000558">
    <property type="component" value="Chromosome"/>
</dbReference>
<dbReference type="Proteomes" id="UP000002519">
    <property type="component" value="Chromosome"/>
</dbReference>
<dbReference type="GO" id="GO:0005737">
    <property type="term" value="C:cytoplasm"/>
    <property type="evidence" value="ECO:0007669"/>
    <property type="project" value="UniProtKB-SubCell"/>
</dbReference>
<dbReference type="GO" id="GO:0005525">
    <property type="term" value="F:GTP binding"/>
    <property type="evidence" value="ECO:0007669"/>
    <property type="project" value="UniProtKB-UniRule"/>
</dbReference>
<dbReference type="GO" id="GO:0046872">
    <property type="term" value="F:metal ion binding"/>
    <property type="evidence" value="ECO:0007669"/>
    <property type="project" value="UniProtKB-KW"/>
</dbReference>
<dbReference type="GO" id="GO:0061603">
    <property type="term" value="F:molybdenum cofactor guanylyltransferase activity"/>
    <property type="evidence" value="ECO:0007669"/>
    <property type="project" value="UniProtKB-EC"/>
</dbReference>
<dbReference type="GO" id="GO:1902758">
    <property type="term" value="P:bis(molybdopterin guanine dinucleotide)molybdenum biosynthetic process"/>
    <property type="evidence" value="ECO:0007669"/>
    <property type="project" value="TreeGrafter"/>
</dbReference>
<dbReference type="CDD" id="cd02503">
    <property type="entry name" value="MobA"/>
    <property type="match status" value="1"/>
</dbReference>
<dbReference type="FunFam" id="3.90.550.10:FF:000118">
    <property type="entry name" value="Molybdenum cofactor guanylyltransferase"/>
    <property type="match status" value="1"/>
</dbReference>
<dbReference type="Gene3D" id="3.90.550.10">
    <property type="entry name" value="Spore Coat Polysaccharide Biosynthesis Protein SpsA, Chain A"/>
    <property type="match status" value="1"/>
</dbReference>
<dbReference type="HAMAP" id="MF_00316">
    <property type="entry name" value="MobA"/>
    <property type="match status" value="1"/>
</dbReference>
<dbReference type="InterPro" id="IPR025877">
    <property type="entry name" value="MobA-like_NTP_Trfase"/>
</dbReference>
<dbReference type="InterPro" id="IPR013482">
    <property type="entry name" value="Molybde_CF_guanTrfase"/>
</dbReference>
<dbReference type="InterPro" id="IPR029044">
    <property type="entry name" value="Nucleotide-diphossugar_trans"/>
</dbReference>
<dbReference type="NCBIfam" id="TIGR02665">
    <property type="entry name" value="molyb_mobA"/>
    <property type="match status" value="1"/>
</dbReference>
<dbReference type="PANTHER" id="PTHR19136">
    <property type="entry name" value="MOLYBDENUM COFACTOR GUANYLYLTRANSFERASE"/>
    <property type="match status" value="1"/>
</dbReference>
<dbReference type="PANTHER" id="PTHR19136:SF81">
    <property type="entry name" value="MOLYBDENUM COFACTOR GUANYLYLTRANSFERASE"/>
    <property type="match status" value="1"/>
</dbReference>
<dbReference type="Pfam" id="PF12804">
    <property type="entry name" value="NTP_transf_3"/>
    <property type="match status" value="1"/>
</dbReference>
<dbReference type="SUPFAM" id="SSF53448">
    <property type="entry name" value="Nucleotide-diphospho-sugar transferases"/>
    <property type="match status" value="1"/>
</dbReference>
<sequence length="194" mass="21629">MNLMTTITGVVLAGGKARRMGGVDKGLLDLNGKPLWQHVADALMTQLSHVVVNANRHQEIYQAGGLKVIEDSLADYPGPLAGMLSVMQQEAGEWFLFCPCDTPYIPHDLAARLNHQRKDAPVVWVHDGERDHPTIAMVNRAIEPLLLEYLQAGERRVMAFMRLAGGHAVDFSDHKDAFVNVNTPEELARWQEKR</sequence>
<gene>
    <name evidence="1" type="primary">mobA</name>
    <name type="synonym">chlB</name>
    <name type="synonym">mob</name>
    <name type="synonym">narB</name>
    <name type="ordered locus">Z5389</name>
    <name type="ordered locus">ECs4780</name>
</gene>
<protein>
    <recommendedName>
        <fullName evidence="1">Molybdenum cofactor guanylyltransferase</fullName>
        <shortName evidence="1">MoCo guanylyltransferase</shortName>
        <ecNumber evidence="1">2.7.7.77</ecNumber>
    </recommendedName>
    <alternativeName>
        <fullName evidence="1">GTP:molybdopterin guanylyltransferase</fullName>
    </alternativeName>
    <alternativeName>
        <fullName evidence="1">Mo-MPT guanylyltransferase</fullName>
    </alternativeName>
    <alternativeName>
        <fullName evidence="1">Molybdopterin guanylyltransferase</fullName>
    </alternativeName>
    <alternativeName>
        <fullName evidence="1">Molybdopterin-guanine dinucleotide synthase</fullName>
        <shortName evidence="1">MGD synthase</shortName>
    </alternativeName>
</protein>